<proteinExistence type="inferred from homology"/>
<feature type="chain" id="PRO_0000160515" description="ATP-dependent protease ATPase subunit HslU">
    <location>
        <begin position="1"/>
        <end position="441"/>
    </location>
</feature>
<feature type="binding site" evidence="1">
    <location>
        <position position="17"/>
    </location>
    <ligand>
        <name>ATP</name>
        <dbReference type="ChEBI" id="CHEBI:30616"/>
    </ligand>
</feature>
<feature type="binding site" evidence="1">
    <location>
        <begin position="60"/>
        <end position="65"/>
    </location>
    <ligand>
        <name>ATP</name>
        <dbReference type="ChEBI" id="CHEBI:30616"/>
    </ligand>
</feature>
<feature type="binding site" evidence="1">
    <location>
        <position position="253"/>
    </location>
    <ligand>
        <name>ATP</name>
        <dbReference type="ChEBI" id="CHEBI:30616"/>
    </ligand>
</feature>
<feature type="binding site" evidence="1">
    <location>
        <position position="319"/>
    </location>
    <ligand>
        <name>ATP</name>
        <dbReference type="ChEBI" id="CHEBI:30616"/>
    </ligand>
</feature>
<feature type="binding site" evidence="1">
    <location>
        <position position="391"/>
    </location>
    <ligand>
        <name>ATP</name>
        <dbReference type="ChEBI" id="CHEBI:30616"/>
    </ligand>
</feature>
<accession>Q5X7B0</accession>
<reference key="1">
    <citation type="journal article" date="2004" name="Nat. Genet.">
        <title>Evidence in the Legionella pneumophila genome for exploitation of host cell functions and high genome plasticity.</title>
        <authorList>
            <person name="Cazalet C."/>
            <person name="Rusniok C."/>
            <person name="Brueggemann H."/>
            <person name="Zidane N."/>
            <person name="Magnier A."/>
            <person name="Ma L."/>
            <person name="Tichit M."/>
            <person name="Jarraud S."/>
            <person name="Bouchier C."/>
            <person name="Vandenesch F."/>
            <person name="Kunst F."/>
            <person name="Etienne J."/>
            <person name="Glaser P."/>
            <person name="Buchrieser C."/>
        </authorList>
    </citation>
    <scope>NUCLEOTIDE SEQUENCE [LARGE SCALE GENOMIC DNA]</scope>
    <source>
        <strain>Paris</strain>
    </source>
</reference>
<name>HSLU_LEGPA</name>
<dbReference type="EMBL" id="CR628336">
    <property type="protein sequence ID" value="CAH11843.1"/>
    <property type="molecule type" value="Genomic_DNA"/>
</dbReference>
<dbReference type="SMR" id="Q5X7B0"/>
<dbReference type="KEGG" id="lpp:lpp0695"/>
<dbReference type="LegioList" id="lpp0695"/>
<dbReference type="HOGENOM" id="CLU_033123_0_0_6"/>
<dbReference type="GO" id="GO:0009376">
    <property type="term" value="C:HslUV protease complex"/>
    <property type="evidence" value="ECO:0007669"/>
    <property type="project" value="UniProtKB-UniRule"/>
</dbReference>
<dbReference type="GO" id="GO:0005524">
    <property type="term" value="F:ATP binding"/>
    <property type="evidence" value="ECO:0007669"/>
    <property type="project" value="UniProtKB-UniRule"/>
</dbReference>
<dbReference type="GO" id="GO:0016887">
    <property type="term" value="F:ATP hydrolysis activity"/>
    <property type="evidence" value="ECO:0007669"/>
    <property type="project" value="InterPro"/>
</dbReference>
<dbReference type="GO" id="GO:0008233">
    <property type="term" value="F:peptidase activity"/>
    <property type="evidence" value="ECO:0007669"/>
    <property type="project" value="InterPro"/>
</dbReference>
<dbReference type="GO" id="GO:0036402">
    <property type="term" value="F:proteasome-activating activity"/>
    <property type="evidence" value="ECO:0007669"/>
    <property type="project" value="UniProtKB-UniRule"/>
</dbReference>
<dbReference type="GO" id="GO:0043335">
    <property type="term" value="P:protein unfolding"/>
    <property type="evidence" value="ECO:0007669"/>
    <property type="project" value="UniProtKB-UniRule"/>
</dbReference>
<dbReference type="GO" id="GO:0051603">
    <property type="term" value="P:proteolysis involved in protein catabolic process"/>
    <property type="evidence" value="ECO:0007669"/>
    <property type="project" value="TreeGrafter"/>
</dbReference>
<dbReference type="CDD" id="cd19498">
    <property type="entry name" value="RecA-like_HslU"/>
    <property type="match status" value="1"/>
</dbReference>
<dbReference type="FunFam" id="3.40.50.300:FF:000213">
    <property type="entry name" value="ATP-dependent protease ATPase subunit HslU"/>
    <property type="match status" value="1"/>
</dbReference>
<dbReference type="FunFam" id="3.40.50.300:FF:000220">
    <property type="entry name" value="ATP-dependent protease ATPase subunit HslU"/>
    <property type="match status" value="1"/>
</dbReference>
<dbReference type="Gene3D" id="1.10.8.60">
    <property type="match status" value="1"/>
</dbReference>
<dbReference type="Gene3D" id="3.40.50.300">
    <property type="entry name" value="P-loop containing nucleotide triphosphate hydrolases"/>
    <property type="match status" value="2"/>
</dbReference>
<dbReference type="HAMAP" id="MF_00249">
    <property type="entry name" value="HslU"/>
    <property type="match status" value="1"/>
</dbReference>
<dbReference type="InterPro" id="IPR003593">
    <property type="entry name" value="AAA+_ATPase"/>
</dbReference>
<dbReference type="InterPro" id="IPR050052">
    <property type="entry name" value="ATP-dep_Clp_protease_ClpX"/>
</dbReference>
<dbReference type="InterPro" id="IPR003959">
    <property type="entry name" value="ATPase_AAA_core"/>
</dbReference>
<dbReference type="InterPro" id="IPR019489">
    <property type="entry name" value="Clp_ATPase_C"/>
</dbReference>
<dbReference type="InterPro" id="IPR004491">
    <property type="entry name" value="HslU"/>
</dbReference>
<dbReference type="InterPro" id="IPR027417">
    <property type="entry name" value="P-loop_NTPase"/>
</dbReference>
<dbReference type="NCBIfam" id="TIGR00390">
    <property type="entry name" value="hslU"/>
    <property type="match status" value="1"/>
</dbReference>
<dbReference type="NCBIfam" id="NF003544">
    <property type="entry name" value="PRK05201.1"/>
    <property type="match status" value="1"/>
</dbReference>
<dbReference type="PANTHER" id="PTHR48102">
    <property type="entry name" value="ATP-DEPENDENT CLP PROTEASE ATP-BINDING SUBUNIT CLPX-LIKE, MITOCHONDRIAL-RELATED"/>
    <property type="match status" value="1"/>
</dbReference>
<dbReference type="PANTHER" id="PTHR48102:SF3">
    <property type="entry name" value="ATP-DEPENDENT PROTEASE ATPASE SUBUNIT HSLU"/>
    <property type="match status" value="1"/>
</dbReference>
<dbReference type="Pfam" id="PF00004">
    <property type="entry name" value="AAA"/>
    <property type="match status" value="1"/>
</dbReference>
<dbReference type="Pfam" id="PF07724">
    <property type="entry name" value="AAA_2"/>
    <property type="match status" value="1"/>
</dbReference>
<dbReference type="SMART" id="SM00382">
    <property type="entry name" value="AAA"/>
    <property type="match status" value="1"/>
</dbReference>
<dbReference type="SMART" id="SM01086">
    <property type="entry name" value="ClpB_D2-small"/>
    <property type="match status" value="1"/>
</dbReference>
<dbReference type="SUPFAM" id="SSF52540">
    <property type="entry name" value="P-loop containing nucleoside triphosphate hydrolases"/>
    <property type="match status" value="1"/>
</dbReference>
<gene>
    <name evidence="1" type="primary">hslU</name>
    <name type="ordered locus">lpp0695</name>
</gene>
<evidence type="ECO:0000255" key="1">
    <source>
        <dbReference type="HAMAP-Rule" id="MF_00249"/>
    </source>
</evidence>
<organism>
    <name type="scientific">Legionella pneumophila (strain Paris)</name>
    <dbReference type="NCBI Taxonomy" id="297246"/>
    <lineage>
        <taxon>Bacteria</taxon>
        <taxon>Pseudomonadati</taxon>
        <taxon>Pseudomonadota</taxon>
        <taxon>Gammaproteobacteria</taxon>
        <taxon>Legionellales</taxon>
        <taxon>Legionellaceae</taxon>
        <taxon>Legionella</taxon>
    </lineage>
</organism>
<keyword id="KW-0067">ATP-binding</keyword>
<keyword id="KW-0143">Chaperone</keyword>
<keyword id="KW-0963">Cytoplasm</keyword>
<keyword id="KW-0547">Nucleotide-binding</keyword>
<sequence length="441" mass="49425">MVMTPREIVQELDKHIIGQDDAKRAVAIALRNRWRRMKIKDPVLRNEIMPKNILMIGPTGVGKTEIARRLANLAKAPFIKVEATKFTEVGYVGRDVDSIIRDLTDMAIKQEREFAMKKVEHLAEDAAEERILDVLLPPARGTLTPGEKNTTARQVFRKQLREGELNDNEIEIEVAATPVGIEIMAPPGMEEMTSQLQSMFQQVGSYRTKTRKMTVAKAMKILREEEAAKLINEEDIKLKAIESVEQNGIVFIDELDKIAKRSDTVSGGDVSREGVQRDLLPLVEGTTVSTKYGMVKSDHILFIASGAFHVAKPSDLIAELQGRLPIRVELSALSVEDFVRILTEPSASLTLQYSALMETEGLTLTFDETGIRRIAEVAWQVNERTENIGARRLYTVMERLLEVVSFEATDKAGETVHVDKAYVDKNLGQLIADEDLARYIL</sequence>
<comment type="function">
    <text evidence="1">ATPase subunit of a proteasome-like degradation complex; this subunit has chaperone activity. The binding of ATP and its subsequent hydrolysis by HslU are essential for unfolding of protein substrates subsequently hydrolyzed by HslV. HslU recognizes the N-terminal part of its protein substrates and unfolds these before they are guided to HslV for hydrolysis.</text>
</comment>
<comment type="subunit">
    <text evidence="1">A double ring-shaped homohexamer of HslV is capped on each side by a ring-shaped HslU homohexamer. The assembly of the HslU/HslV complex is dependent on binding of ATP.</text>
</comment>
<comment type="subcellular location">
    <subcellularLocation>
        <location evidence="1">Cytoplasm</location>
    </subcellularLocation>
</comment>
<comment type="similarity">
    <text evidence="1">Belongs to the ClpX chaperone family. HslU subfamily.</text>
</comment>
<protein>
    <recommendedName>
        <fullName evidence="1">ATP-dependent protease ATPase subunit HslU</fullName>
    </recommendedName>
    <alternativeName>
        <fullName evidence="1">Unfoldase HslU</fullName>
    </alternativeName>
</protein>